<reference key="1">
    <citation type="journal article" date="2004" name="Nature">
        <title>Genome evolution in yeasts.</title>
        <authorList>
            <person name="Dujon B."/>
            <person name="Sherman D."/>
            <person name="Fischer G."/>
            <person name="Durrens P."/>
            <person name="Casaregola S."/>
            <person name="Lafontaine I."/>
            <person name="de Montigny J."/>
            <person name="Marck C."/>
            <person name="Neuveglise C."/>
            <person name="Talla E."/>
            <person name="Goffard N."/>
            <person name="Frangeul L."/>
            <person name="Aigle M."/>
            <person name="Anthouard V."/>
            <person name="Babour A."/>
            <person name="Barbe V."/>
            <person name="Barnay S."/>
            <person name="Blanchin S."/>
            <person name="Beckerich J.-M."/>
            <person name="Beyne E."/>
            <person name="Bleykasten C."/>
            <person name="Boisrame A."/>
            <person name="Boyer J."/>
            <person name="Cattolico L."/>
            <person name="Confanioleri F."/>
            <person name="de Daruvar A."/>
            <person name="Despons L."/>
            <person name="Fabre E."/>
            <person name="Fairhead C."/>
            <person name="Ferry-Dumazet H."/>
            <person name="Groppi A."/>
            <person name="Hantraye F."/>
            <person name="Hennequin C."/>
            <person name="Jauniaux N."/>
            <person name="Joyet P."/>
            <person name="Kachouri R."/>
            <person name="Kerrest A."/>
            <person name="Koszul R."/>
            <person name="Lemaire M."/>
            <person name="Lesur I."/>
            <person name="Ma L."/>
            <person name="Muller H."/>
            <person name="Nicaud J.-M."/>
            <person name="Nikolski M."/>
            <person name="Oztas S."/>
            <person name="Ozier-Kalogeropoulos O."/>
            <person name="Pellenz S."/>
            <person name="Potier S."/>
            <person name="Richard G.-F."/>
            <person name="Straub M.-L."/>
            <person name="Suleau A."/>
            <person name="Swennen D."/>
            <person name="Tekaia F."/>
            <person name="Wesolowski-Louvel M."/>
            <person name="Westhof E."/>
            <person name="Wirth B."/>
            <person name="Zeniou-Meyer M."/>
            <person name="Zivanovic Y."/>
            <person name="Bolotin-Fukuhara M."/>
            <person name="Thierry A."/>
            <person name="Bouchier C."/>
            <person name="Caudron B."/>
            <person name="Scarpelli C."/>
            <person name="Gaillardin C."/>
            <person name="Weissenbach J."/>
            <person name="Wincker P."/>
            <person name="Souciet J.-L."/>
        </authorList>
    </citation>
    <scope>NUCLEOTIDE SEQUENCE [LARGE SCALE GENOMIC DNA]</scope>
    <source>
        <strain>ATCC 36239 / CBS 767 / BCRC 21394 / JCM 1990 / NBRC 0083 / IGC 2968</strain>
    </source>
</reference>
<accession>Q6BJX6</accession>
<dbReference type="EC" id="3.6.4.13"/>
<dbReference type="EMBL" id="CR382138">
    <property type="protein sequence ID" value="CAG89921.1"/>
    <property type="status" value="ALT_SEQ"/>
    <property type="molecule type" value="Genomic_DNA"/>
</dbReference>
<dbReference type="RefSeq" id="XP_461495.1">
    <property type="nucleotide sequence ID" value="XM_461495.1"/>
</dbReference>
<dbReference type="SMR" id="Q6BJX6"/>
<dbReference type="FunCoup" id="Q6BJX6">
    <property type="interactions" value="1411"/>
</dbReference>
<dbReference type="STRING" id="284592.Q6BJX6"/>
<dbReference type="GeneID" id="2903103"/>
<dbReference type="KEGG" id="dha:DEHA2F26598g"/>
<dbReference type="eggNOG" id="KOG0326">
    <property type="taxonomic scope" value="Eukaryota"/>
</dbReference>
<dbReference type="HOGENOM" id="CLU_003041_30_2_1"/>
<dbReference type="InParanoid" id="Q6BJX6"/>
<dbReference type="OrthoDB" id="10265785at2759"/>
<dbReference type="Proteomes" id="UP000000599">
    <property type="component" value="Chromosome F"/>
</dbReference>
<dbReference type="GO" id="GO:0000932">
    <property type="term" value="C:P-body"/>
    <property type="evidence" value="ECO:0007669"/>
    <property type="project" value="UniProtKB-SubCell"/>
</dbReference>
<dbReference type="GO" id="GO:0005524">
    <property type="term" value="F:ATP binding"/>
    <property type="evidence" value="ECO:0007669"/>
    <property type="project" value="UniProtKB-KW"/>
</dbReference>
<dbReference type="GO" id="GO:0016887">
    <property type="term" value="F:ATP hydrolysis activity"/>
    <property type="evidence" value="ECO:0007669"/>
    <property type="project" value="RHEA"/>
</dbReference>
<dbReference type="GO" id="GO:0003723">
    <property type="term" value="F:RNA binding"/>
    <property type="evidence" value="ECO:0007669"/>
    <property type="project" value="UniProtKB-KW"/>
</dbReference>
<dbReference type="GO" id="GO:0003724">
    <property type="term" value="F:RNA helicase activity"/>
    <property type="evidence" value="ECO:0007669"/>
    <property type="project" value="UniProtKB-EC"/>
</dbReference>
<dbReference type="GO" id="GO:0006397">
    <property type="term" value="P:mRNA processing"/>
    <property type="evidence" value="ECO:0007669"/>
    <property type="project" value="UniProtKB-KW"/>
</dbReference>
<dbReference type="GO" id="GO:0051028">
    <property type="term" value="P:mRNA transport"/>
    <property type="evidence" value="ECO:0007669"/>
    <property type="project" value="UniProtKB-KW"/>
</dbReference>
<dbReference type="GO" id="GO:0006417">
    <property type="term" value="P:regulation of translation"/>
    <property type="evidence" value="ECO:0007669"/>
    <property type="project" value="UniProtKB-KW"/>
</dbReference>
<dbReference type="CDD" id="cd17940">
    <property type="entry name" value="DEADc_DDX6"/>
    <property type="match status" value="1"/>
</dbReference>
<dbReference type="CDD" id="cd18787">
    <property type="entry name" value="SF2_C_DEAD"/>
    <property type="match status" value="1"/>
</dbReference>
<dbReference type="FunFam" id="3.40.50.300:FF:000114">
    <property type="entry name" value="ATP-dependent RNA helicase DDX6"/>
    <property type="match status" value="1"/>
</dbReference>
<dbReference type="FunFam" id="3.40.50.300:FF:000364">
    <property type="entry name" value="ATP-dependent RNA helicase DDX6"/>
    <property type="match status" value="1"/>
</dbReference>
<dbReference type="Gene3D" id="3.40.50.300">
    <property type="entry name" value="P-loop containing nucleotide triphosphate hydrolases"/>
    <property type="match status" value="2"/>
</dbReference>
<dbReference type="InterPro" id="IPR011545">
    <property type="entry name" value="DEAD/DEAH_box_helicase_dom"/>
</dbReference>
<dbReference type="InterPro" id="IPR014001">
    <property type="entry name" value="Helicase_ATP-bd"/>
</dbReference>
<dbReference type="InterPro" id="IPR001650">
    <property type="entry name" value="Helicase_C-like"/>
</dbReference>
<dbReference type="InterPro" id="IPR027417">
    <property type="entry name" value="P-loop_NTPase"/>
</dbReference>
<dbReference type="InterPro" id="IPR000629">
    <property type="entry name" value="RNA-helicase_DEAD-box_CS"/>
</dbReference>
<dbReference type="InterPro" id="IPR014014">
    <property type="entry name" value="RNA_helicase_DEAD_Q_motif"/>
</dbReference>
<dbReference type="PANTHER" id="PTHR47960">
    <property type="entry name" value="DEAD-BOX ATP-DEPENDENT RNA HELICASE 50"/>
    <property type="match status" value="1"/>
</dbReference>
<dbReference type="Pfam" id="PF00270">
    <property type="entry name" value="DEAD"/>
    <property type="match status" value="1"/>
</dbReference>
<dbReference type="Pfam" id="PF00271">
    <property type="entry name" value="Helicase_C"/>
    <property type="match status" value="1"/>
</dbReference>
<dbReference type="SMART" id="SM00487">
    <property type="entry name" value="DEXDc"/>
    <property type="match status" value="1"/>
</dbReference>
<dbReference type="SMART" id="SM00490">
    <property type="entry name" value="HELICc"/>
    <property type="match status" value="1"/>
</dbReference>
<dbReference type="SUPFAM" id="SSF52540">
    <property type="entry name" value="P-loop containing nucleoside triphosphate hydrolases"/>
    <property type="match status" value="1"/>
</dbReference>
<dbReference type="PROSITE" id="PS00039">
    <property type="entry name" value="DEAD_ATP_HELICASE"/>
    <property type="match status" value="1"/>
</dbReference>
<dbReference type="PROSITE" id="PS51192">
    <property type="entry name" value="HELICASE_ATP_BIND_1"/>
    <property type="match status" value="1"/>
</dbReference>
<dbReference type="PROSITE" id="PS51194">
    <property type="entry name" value="HELICASE_CTER"/>
    <property type="match status" value="1"/>
</dbReference>
<dbReference type="PROSITE" id="PS51195">
    <property type="entry name" value="Q_MOTIF"/>
    <property type="match status" value="1"/>
</dbReference>
<protein>
    <recommendedName>
        <fullName>ATP-dependent RNA helicase DHH1</fullName>
        <ecNumber>3.6.4.13</ecNumber>
    </recommendedName>
</protein>
<keyword id="KW-0067">ATP-binding</keyword>
<keyword id="KW-0963">Cytoplasm</keyword>
<keyword id="KW-0347">Helicase</keyword>
<keyword id="KW-0378">Hydrolase</keyword>
<keyword id="KW-0507">mRNA processing</keyword>
<keyword id="KW-0509">mRNA transport</keyword>
<keyword id="KW-0547">Nucleotide-binding</keyword>
<keyword id="KW-1185">Reference proteome</keyword>
<keyword id="KW-0694">RNA-binding</keyword>
<keyword id="KW-0810">Translation regulation</keyword>
<keyword id="KW-0813">Transport</keyword>
<feature type="chain" id="PRO_0000294619" description="ATP-dependent RNA helicase DHH1">
    <location>
        <begin position="1"/>
        <end position="516"/>
    </location>
</feature>
<feature type="domain" description="Helicase ATP-binding" evidence="2">
    <location>
        <begin position="61"/>
        <end position="231"/>
    </location>
</feature>
<feature type="domain" description="Helicase C-terminal" evidence="3">
    <location>
        <begin position="241"/>
        <end position="401"/>
    </location>
</feature>
<feature type="region of interest" description="Disordered" evidence="4">
    <location>
        <begin position="1"/>
        <end position="22"/>
    </location>
</feature>
<feature type="region of interest" description="Disordered" evidence="4">
    <location>
        <begin position="436"/>
        <end position="516"/>
    </location>
</feature>
<feature type="short sequence motif" description="Q motif">
    <location>
        <begin position="30"/>
        <end position="58"/>
    </location>
</feature>
<feature type="short sequence motif" description="DEAD box">
    <location>
        <begin position="179"/>
        <end position="182"/>
    </location>
</feature>
<feature type="compositionally biased region" description="Polar residues" evidence="4">
    <location>
        <begin position="1"/>
        <end position="14"/>
    </location>
</feature>
<feature type="compositionally biased region" description="Low complexity" evidence="4">
    <location>
        <begin position="461"/>
        <end position="471"/>
    </location>
</feature>
<feature type="compositionally biased region" description="Low complexity" evidence="4">
    <location>
        <begin position="479"/>
        <end position="516"/>
    </location>
</feature>
<feature type="binding site" evidence="2">
    <location>
        <begin position="74"/>
        <end position="81"/>
    </location>
    <ligand>
        <name>ATP</name>
        <dbReference type="ChEBI" id="CHEBI:30616"/>
    </ligand>
</feature>
<sequence>MTDQNWKESLNIPQKDTRPQTEDVLNTKGKTFEDFPLKRELLMGIFEAGFEKPSPVQEESIPMALAGRDILARAKNGTGKTASFVIPCLQQARPKVNKIQALILVPTRELALQTSQVVRTLGKHLGLQCMVTTGGTSLRDDILRLNDPVHVLVGTPGRVLDLASRKVADLSECPLFVMDEADKMLSREFKGIIEQILAFFPTTRQSLLFSATFPLAVKSFMDQHLTKPYEINLMDELTLRGISQFYAFVEEKQKLHCLNTLFSKLQINQAIIFCNSTNRVELLAKKITELGYSCYYSHAKMPQHARNKVFHEFRQGKVRVLVCSDLLTRGIDIQAVNVVINFDFPKTAETYLHRIGRSGRFGHLGLAINLMSWNDRYNLYKIEQELGTEIKPIPATIDKSLYVAENEAAVPRPFKIDQLPKGNETVHKKSGYEYKGQPEVSSNVAGMPQQVPNGPVPPQQVNPSQGNQMPPQQYPGYPPQYQQQMPPQFNGYPPQQQYASPQYQQPQPQSQQQQFQ</sequence>
<comment type="function">
    <text evidence="1">ATP-dependent RNA helicase involved in mRNA turnover, and more specifically in mRNA decapping by activating the decapping enzyme DCP1. Is involved in G1/S DNA-damage checkpoint recovery, probably through the regulation of the translational status of a subset of mRNAs. May also have a role in translation and mRNA nuclear export (By similarity).</text>
</comment>
<comment type="catalytic activity">
    <reaction>
        <text>ATP + H2O = ADP + phosphate + H(+)</text>
        <dbReference type="Rhea" id="RHEA:13065"/>
        <dbReference type="ChEBI" id="CHEBI:15377"/>
        <dbReference type="ChEBI" id="CHEBI:15378"/>
        <dbReference type="ChEBI" id="CHEBI:30616"/>
        <dbReference type="ChEBI" id="CHEBI:43474"/>
        <dbReference type="ChEBI" id="CHEBI:456216"/>
        <dbReference type="EC" id="3.6.4.13"/>
    </reaction>
</comment>
<comment type="subcellular location">
    <subcellularLocation>
        <location evidence="1">Cytoplasm</location>
        <location evidence="1">P-body</location>
    </subcellularLocation>
    <text evidence="1">Is concentrated in several cytoplasmic foci called P bodies (or cytoplasmic processing bodies) which represent sites of mRNA decapping and 5' to 3' exonucleotidic decay.</text>
</comment>
<comment type="domain">
    <text>The Q motif is unique to and characteristic of the DEAD box family of RNA helicases and controls ATP binding and hydrolysis.</text>
</comment>
<comment type="similarity">
    <text evidence="5">Belongs to the DEAD box helicase family. DDX6/DHH1 subfamily.</text>
</comment>
<comment type="sequence caution" evidence="5">
    <conflict type="erroneous gene model prediction">
        <sequence resource="EMBL-CDS" id="CAG89921"/>
    </conflict>
</comment>
<gene>
    <name type="primary">DHH1</name>
    <name type="ordered locus">DEHA2F26598g</name>
</gene>
<evidence type="ECO:0000250" key="1"/>
<evidence type="ECO:0000255" key="2">
    <source>
        <dbReference type="PROSITE-ProRule" id="PRU00541"/>
    </source>
</evidence>
<evidence type="ECO:0000255" key="3">
    <source>
        <dbReference type="PROSITE-ProRule" id="PRU00542"/>
    </source>
</evidence>
<evidence type="ECO:0000256" key="4">
    <source>
        <dbReference type="SAM" id="MobiDB-lite"/>
    </source>
</evidence>
<evidence type="ECO:0000305" key="5"/>
<organism>
    <name type="scientific">Debaryomyces hansenii (strain ATCC 36239 / CBS 767 / BCRC 21394 / JCM 1990 / NBRC 0083 / IGC 2968)</name>
    <name type="common">Yeast</name>
    <name type="synonym">Torulaspora hansenii</name>
    <dbReference type="NCBI Taxonomy" id="284592"/>
    <lineage>
        <taxon>Eukaryota</taxon>
        <taxon>Fungi</taxon>
        <taxon>Dikarya</taxon>
        <taxon>Ascomycota</taxon>
        <taxon>Saccharomycotina</taxon>
        <taxon>Pichiomycetes</taxon>
        <taxon>Debaryomycetaceae</taxon>
        <taxon>Debaryomyces</taxon>
    </lineage>
</organism>
<name>DHH1_DEBHA</name>
<proteinExistence type="inferred from homology"/>